<organism>
    <name type="scientific">Staphylococcus aureus (strain USA300 / TCH1516)</name>
    <dbReference type="NCBI Taxonomy" id="451516"/>
    <lineage>
        <taxon>Bacteria</taxon>
        <taxon>Bacillati</taxon>
        <taxon>Bacillota</taxon>
        <taxon>Bacilli</taxon>
        <taxon>Bacillales</taxon>
        <taxon>Staphylococcaceae</taxon>
        <taxon>Staphylococcus</taxon>
    </lineage>
</organism>
<name>GSA2_STAAT</name>
<dbReference type="EC" id="5.4.3.8" evidence="1"/>
<dbReference type="EMBL" id="CP000730">
    <property type="protein sequence ID" value="ABX29862.1"/>
    <property type="molecule type" value="Genomic_DNA"/>
</dbReference>
<dbReference type="RefSeq" id="WP_001011598.1">
    <property type="nucleotide sequence ID" value="NC_010079.1"/>
</dbReference>
<dbReference type="SMR" id="A8YY36"/>
<dbReference type="KEGG" id="sax:USA300HOU_1859"/>
<dbReference type="HOGENOM" id="CLU_016922_1_5_9"/>
<dbReference type="UniPathway" id="UPA00251">
    <property type="reaction ID" value="UER00317"/>
</dbReference>
<dbReference type="GO" id="GO:0005737">
    <property type="term" value="C:cytoplasm"/>
    <property type="evidence" value="ECO:0007669"/>
    <property type="project" value="UniProtKB-SubCell"/>
</dbReference>
<dbReference type="GO" id="GO:0042286">
    <property type="term" value="F:glutamate-1-semialdehyde 2,1-aminomutase activity"/>
    <property type="evidence" value="ECO:0007669"/>
    <property type="project" value="UniProtKB-UniRule"/>
</dbReference>
<dbReference type="GO" id="GO:0030170">
    <property type="term" value="F:pyridoxal phosphate binding"/>
    <property type="evidence" value="ECO:0007669"/>
    <property type="project" value="InterPro"/>
</dbReference>
<dbReference type="GO" id="GO:0008483">
    <property type="term" value="F:transaminase activity"/>
    <property type="evidence" value="ECO:0007669"/>
    <property type="project" value="InterPro"/>
</dbReference>
<dbReference type="GO" id="GO:0006782">
    <property type="term" value="P:protoporphyrinogen IX biosynthetic process"/>
    <property type="evidence" value="ECO:0007669"/>
    <property type="project" value="UniProtKB-UniRule"/>
</dbReference>
<dbReference type="CDD" id="cd00610">
    <property type="entry name" value="OAT_like"/>
    <property type="match status" value="1"/>
</dbReference>
<dbReference type="FunFam" id="3.40.640.10:FF:000021">
    <property type="entry name" value="Glutamate-1-semialdehyde 2,1-aminomutase"/>
    <property type="match status" value="1"/>
</dbReference>
<dbReference type="Gene3D" id="3.90.1150.10">
    <property type="entry name" value="Aspartate Aminotransferase, domain 1"/>
    <property type="match status" value="1"/>
</dbReference>
<dbReference type="Gene3D" id="3.40.640.10">
    <property type="entry name" value="Type I PLP-dependent aspartate aminotransferase-like (Major domain)"/>
    <property type="match status" value="1"/>
</dbReference>
<dbReference type="HAMAP" id="MF_00375">
    <property type="entry name" value="HemL_aminotrans_3"/>
    <property type="match status" value="1"/>
</dbReference>
<dbReference type="InterPro" id="IPR004639">
    <property type="entry name" value="4pyrrol_synth_GluAld_NH2Trfase"/>
</dbReference>
<dbReference type="InterPro" id="IPR005814">
    <property type="entry name" value="Aminotrans_3"/>
</dbReference>
<dbReference type="InterPro" id="IPR049704">
    <property type="entry name" value="Aminotrans_3_PPA_site"/>
</dbReference>
<dbReference type="InterPro" id="IPR015424">
    <property type="entry name" value="PyrdxlP-dep_Trfase"/>
</dbReference>
<dbReference type="InterPro" id="IPR015421">
    <property type="entry name" value="PyrdxlP-dep_Trfase_major"/>
</dbReference>
<dbReference type="InterPro" id="IPR015422">
    <property type="entry name" value="PyrdxlP-dep_Trfase_small"/>
</dbReference>
<dbReference type="NCBIfam" id="TIGR00713">
    <property type="entry name" value="hemL"/>
    <property type="match status" value="1"/>
</dbReference>
<dbReference type="NCBIfam" id="NF000818">
    <property type="entry name" value="PRK00062.1"/>
    <property type="match status" value="1"/>
</dbReference>
<dbReference type="NCBIfam" id="NF009055">
    <property type="entry name" value="PRK12389.1"/>
    <property type="match status" value="1"/>
</dbReference>
<dbReference type="PANTHER" id="PTHR43713">
    <property type="entry name" value="GLUTAMATE-1-SEMIALDEHYDE 2,1-AMINOMUTASE"/>
    <property type="match status" value="1"/>
</dbReference>
<dbReference type="PANTHER" id="PTHR43713:SF1">
    <property type="entry name" value="GLUTAMATE-1-SEMIALDEHYDE 2,1-AMINOMUTASE 2"/>
    <property type="match status" value="1"/>
</dbReference>
<dbReference type="Pfam" id="PF00202">
    <property type="entry name" value="Aminotran_3"/>
    <property type="match status" value="1"/>
</dbReference>
<dbReference type="SUPFAM" id="SSF53383">
    <property type="entry name" value="PLP-dependent transferases"/>
    <property type="match status" value="1"/>
</dbReference>
<dbReference type="PROSITE" id="PS00600">
    <property type="entry name" value="AA_TRANSFER_CLASS_3"/>
    <property type="match status" value="1"/>
</dbReference>
<sequence>MNFSESERLQQLSNEYILGGVNSPSRSYKAVGGGAPVVMKEGHGAYLYDVDGNKFIDYLQAYGPIITGHAHPHITKAIQEQAAKGVLFGTPTELEIEFSKKLRDAIPSLEKIRFVNSGTEAVMTTIRVARAYTKRNKIIKFAGSYHGHSDLVLVAAGSGPSQLGSPDSAGVPESVAREVITVPFNDINAYKEAIEFWGDEIAAVLVEPIVGNFGMVMPQPGFLEEVNEISHNNGTLVIYDEVITAFRFHYGAAQDLLGVIPDLTAFGKIVGGGLPIGGYGGRQDIMEQVAPLGPAYQAGTMAGNPLSMKAGIALLEVLEQDGVYEKLDSLGQQLEEGLLKLIEKHNITATINRIYGSLTLYFTDEKVTHYDQVEHSDGEAFGKFFKLMLNQGINLAPSKFEAWFLTTEHTEEDIKQTLKAADYAFSQMK</sequence>
<gene>
    <name evidence="1" type="primary">hemL2</name>
    <name type="ordered locus">USA300HOU_1859</name>
</gene>
<reference key="1">
    <citation type="journal article" date="2007" name="BMC Microbiol.">
        <title>Subtle genetic changes enhance virulence of methicillin resistant and sensitive Staphylococcus aureus.</title>
        <authorList>
            <person name="Highlander S.K."/>
            <person name="Hulten K.G."/>
            <person name="Qin X."/>
            <person name="Jiang H."/>
            <person name="Yerrapragada S."/>
            <person name="Mason E.O. Jr."/>
            <person name="Shang Y."/>
            <person name="Williams T.M."/>
            <person name="Fortunov R.M."/>
            <person name="Liu Y."/>
            <person name="Igboeli O."/>
            <person name="Petrosino J."/>
            <person name="Tirumalai M."/>
            <person name="Uzman A."/>
            <person name="Fox G.E."/>
            <person name="Cardenas A.M."/>
            <person name="Muzny D.M."/>
            <person name="Hemphill L."/>
            <person name="Ding Y."/>
            <person name="Dugan S."/>
            <person name="Blyth P.R."/>
            <person name="Buhay C.J."/>
            <person name="Dinh H.H."/>
            <person name="Hawes A.C."/>
            <person name="Holder M."/>
            <person name="Kovar C.L."/>
            <person name="Lee S.L."/>
            <person name="Liu W."/>
            <person name="Nazareth L.V."/>
            <person name="Wang Q."/>
            <person name="Zhou J."/>
            <person name="Kaplan S.L."/>
            <person name="Weinstock G.M."/>
        </authorList>
    </citation>
    <scope>NUCLEOTIDE SEQUENCE [LARGE SCALE GENOMIC DNA]</scope>
    <source>
        <strain>USA300 / TCH1516</strain>
    </source>
</reference>
<feature type="chain" id="PRO_0000382380" description="Glutamate-1-semialdehyde 2,1-aminomutase 2">
    <location>
        <begin position="1"/>
        <end position="429"/>
    </location>
</feature>
<feature type="modified residue" description="N6-(pyridoxal phosphate)lysine" evidence="1">
    <location>
        <position position="268"/>
    </location>
</feature>
<comment type="catalytic activity">
    <reaction evidence="1">
        <text>(S)-4-amino-5-oxopentanoate = 5-aminolevulinate</text>
        <dbReference type="Rhea" id="RHEA:14265"/>
        <dbReference type="ChEBI" id="CHEBI:57501"/>
        <dbReference type="ChEBI" id="CHEBI:356416"/>
        <dbReference type="EC" id="5.4.3.8"/>
    </reaction>
</comment>
<comment type="cofactor">
    <cofactor evidence="1">
        <name>pyridoxal 5'-phosphate</name>
        <dbReference type="ChEBI" id="CHEBI:597326"/>
    </cofactor>
</comment>
<comment type="pathway">
    <text evidence="1">Porphyrin-containing compound metabolism; protoporphyrin-IX biosynthesis; 5-aminolevulinate from L-glutamyl-tRNA(Glu): step 2/2.</text>
</comment>
<comment type="subunit">
    <text evidence="1">Homodimer.</text>
</comment>
<comment type="subcellular location">
    <subcellularLocation>
        <location evidence="1">Cytoplasm</location>
    </subcellularLocation>
</comment>
<comment type="similarity">
    <text evidence="1">Belongs to the class-III pyridoxal-phosphate-dependent aminotransferase family. HemL subfamily.</text>
</comment>
<evidence type="ECO:0000255" key="1">
    <source>
        <dbReference type="HAMAP-Rule" id="MF_00375"/>
    </source>
</evidence>
<proteinExistence type="inferred from homology"/>
<accession>A8YY36</accession>
<protein>
    <recommendedName>
        <fullName evidence="1">Glutamate-1-semialdehyde 2,1-aminomutase 2</fullName>
        <shortName evidence="1">GSA 2</shortName>
        <ecNumber evidence="1">5.4.3.8</ecNumber>
    </recommendedName>
    <alternativeName>
        <fullName evidence="1">Glutamate-1-semialdehyde aminotransferase 2</fullName>
        <shortName evidence="1">GSA-AT 2</shortName>
    </alternativeName>
</protein>
<keyword id="KW-0963">Cytoplasm</keyword>
<keyword id="KW-0413">Isomerase</keyword>
<keyword id="KW-0627">Porphyrin biosynthesis</keyword>
<keyword id="KW-0663">Pyridoxal phosphate</keyword>